<sequence>MALTLAATALVLLPLVTAQQIGSIAENHPELTTYRCSSQAGCVAQSTSVVLDINAHWIHQNGAQTSCTTSSGLDPSLCPDKVTCSQNCVVEGITDYSSFGVQNSGDAMTLRQYQVQNGQIKTLRPRVYLLAEDGINYSKLQLLNQEFTFDVDASKLPCGMNGALYLSEMDASGGRSALNPAGATYGTGYCDAQCFNPGPWINGEANTAGAGACCQEMDLWEANSRSTIFSPHPCTTAGLYACTGAECYSICDGYGCTYNPYELGAKDYYGYGLTIDTAKPITVVTQFMTADNTATGTLAEIRRLYVQDGKVIGNTAVAMTEAFCSSSRTFEELGGLQRMGEALGRGMVPVFSIWDDPGLWMHWLDSDGAGPCGNTEGDPAFIQANYPNTAVTFSKVRWGDIGSTYSS</sequence>
<feature type="signal peptide" evidence="2">
    <location>
        <begin position="1"/>
        <end position="18"/>
    </location>
</feature>
<feature type="chain" id="PRO_0000395160" description="Probable endo-beta-1,4-glucanase celB">
    <location>
        <begin position="19"/>
        <end position="407"/>
    </location>
</feature>
<feature type="active site" description="Nucleophile" evidence="1">
    <location>
        <position position="216"/>
    </location>
</feature>
<feature type="active site" description="Proton donor" evidence="1">
    <location>
        <position position="221"/>
    </location>
</feature>
<feature type="glycosylation site" description="N-linked (GlcNAc...) asparagine" evidence="2">
    <location>
        <position position="136"/>
    </location>
</feature>
<gene>
    <name type="primary">celB</name>
    <name type="ORF">NFIA_114250</name>
</gene>
<name>CELB_NEOFI</name>
<comment type="function">
    <text evidence="1">Has endoglucanase activity on substrates containing beta-1,4 glycosidic bonds, like in carboxymethylcellulose (CMC), hydroxyethylcellulose (HEC) and beta-glucan. Involved in the degradation of complex natural cellulosic substrates (By similarity).</text>
</comment>
<comment type="catalytic activity">
    <reaction>
        <text>Endohydrolysis of (1-&gt;4)-beta-D-glucosidic linkages in cellulose, lichenin and cereal beta-D-glucans.</text>
        <dbReference type="EC" id="3.2.1.4"/>
    </reaction>
</comment>
<comment type="subcellular location">
    <subcellularLocation>
        <location evidence="1">Secreted</location>
    </subcellularLocation>
</comment>
<comment type="similarity">
    <text evidence="3">Belongs to the glycosyl hydrolase 7 (cellulase C) family.</text>
</comment>
<dbReference type="EC" id="3.2.1.4"/>
<dbReference type="EMBL" id="DS027692">
    <property type="protein sequence ID" value="EAW20893.1"/>
    <property type="molecule type" value="Genomic_DNA"/>
</dbReference>
<dbReference type="RefSeq" id="XP_001262790.1">
    <property type="nucleotide sequence ID" value="XM_001262789.1"/>
</dbReference>
<dbReference type="SMR" id="A1D932"/>
<dbReference type="STRING" id="331117.A1D932"/>
<dbReference type="GlyCosmos" id="A1D932">
    <property type="glycosylation" value="1 site, No reported glycans"/>
</dbReference>
<dbReference type="EnsemblFungi" id="EAW20893">
    <property type="protein sequence ID" value="EAW20893"/>
    <property type="gene ID" value="NFIA_114250"/>
</dbReference>
<dbReference type="GeneID" id="4589309"/>
<dbReference type="KEGG" id="nfi:NFIA_114250"/>
<dbReference type="VEuPathDB" id="FungiDB:NFIA_114250"/>
<dbReference type="eggNOG" id="ENOG502SJT6">
    <property type="taxonomic scope" value="Eukaryota"/>
</dbReference>
<dbReference type="HOGENOM" id="CLU_020817_0_1_1"/>
<dbReference type="OMA" id="VCCNEMD"/>
<dbReference type="OrthoDB" id="412382at2759"/>
<dbReference type="Proteomes" id="UP000006702">
    <property type="component" value="Unassembled WGS sequence"/>
</dbReference>
<dbReference type="GO" id="GO:0005576">
    <property type="term" value="C:extracellular region"/>
    <property type="evidence" value="ECO:0007669"/>
    <property type="project" value="UniProtKB-SubCell"/>
</dbReference>
<dbReference type="GO" id="GO:0008810">
    <property type="term" value="F:cellulase activity"/>
    <property type="evidence" value="ECO:0007669"/>
    <property type="project" value="UniProtKB-EC"/>
</dbReference>
<dbReference type="GO" id="GO:0030245">
    <property type="term" value="P:cellulose catabolic process"/>
    <property type="evidence" value="ECO:0007669"/>
    <property type="project" value="UniProtKB-KW"/>
</dbReference>
<dbReference type="CDD" id="cd07999">
    <property type="entry name" value="GH7_CBH_EG"/>
    <property type="match status" value="1"/>
</dbReference>
<dbReference type="Gene3D" id="2.70.100.10">
    <property type="entry name" value="Glycoside hydrolase, family 7, domain"/>
    <property type="match status" value="1"/>
</dbReference>
<dbReference type="InterPro" id="IPR013320">
    <property type="entry name" value="ConA-like_dom_sf"/>
</dbReference>
<dbReference type="InterPro" id="IPR001722">
    <property type="entry name" value="Glyco_hydro_7"/>
</dbReference>
<dbReference type="InterPro" id="IPR037019">
    <property type="entry name" value="Glyco_hydro_7_sf"/>
</dbReference>
<dbReference type="PANTHER" id="PTHR33753">
    <property type="entry name" value="1,4-BETA-D-GLUCAN CELLOBIOHYDROLASE B"/>
    <property type="match status" value="1"/>
</dbReference>
<dbReference type="PANTHER" id="PTHR33753:SF1">
    <property type="entry name" value="ENDO-BETA-1,4-GLUCANASE CELB"/>
    <property type="match status" value="1"/>
</dbReference>
<dbReference type="Pfam" id="PF00840">
    <property type="entry name" value="Glyco_hydro_7"/>
    <property type="match status" value="1"/>
</dbReference>
<dbReference type="PRINTS" id="PR00734">
    <property type="entry name" value="GLHYDRLASE7"/>
</dbReference>
<dbReference type="SUPFAM" id="SSF49899">
    <property type="entry name" value="Concanavalin A-like lectins/glucanases"/>
    <property type="match status" value="1"/>
</dbReference>
<reference key="1">
    <citation type="journal article" date="2008" name="PLoS Genet.">
        <title>Genomic islands in the pathogenic filamentous fungus Aspergillus fumigatus.</title>
        <authorList>
            <person name="Fedorova N.D."/>
            <person name="Khaldi N."/>
            <person name="Joardar V.S."/>
            <person name="Maiti R."/>
            <person name="Amedeo P."/>
            <person name="Anderson M.J."/>
            <person name="Crabtree J."/>
            <person name="Silva J.C."/>
            <person name="Badger J.H."/>
            <person name="Albarraq A."/>
            <person name="Angiuoli S."/>
            <person name="Bussey H."/>
            <person name="Bowyer P."/>
            <person name="Cotty P.J."/>
            <person name="Dyer P.S."/>
            <person name="Egan A."/>
            <person name="Galens K."/>
            <person name="Fraser-Liggett C.M."/>
            <person name="Haas B.J."/>
            <person name="Inman J.M."/>
            <person name="Kent R."/>
            <person name="Lemieux S."/>
            <person name="Malavazi I."/>
            <person name="Orvis J."/>
            <person name="Roemer T."/>
            <person name="Ronning C.M."/>
            <person name="Sundaram J.P."/>
            <person name="Sutton G."/>
            <person name="Turner G."/>
            <person name="Venter J.C."/>
            <person name="White O.R."/>
            <person name="Whitty B.R."/>
            <person name="Youngman P."/>
            <person name="Wolfe K.H."/>
            <person name="Goldman G.H."/>
            <person name="Wortman J.R."/>
            <person name="Jiang B."/>
            <person name="Denning D.W."/>
            <person name="Nierman W.C."/>
        </authorList>
    </citation>
    <scope>NUCLEOTIDE SEQUENCE [LARGE SCALE GENOMIC DNA]</scope>
    <source>
        <strain>ATCC 1020 / DSM 3700 / CBS 544.65 / FGSC A1164 / JCM 1740 / NRRL 181 / WB 181</strain>
    </source>
</reference>
<keyword id="KW-0119">Carbohydrate metabolism</keyword>
<keyword id="KW-0136">Cellulose degradation</keyword>
<keyword id="KW-0325">Glycoprotein</keyword>
<keyword id="KW-0326">Glycosidase</keyword>
<keyword id="KW-0378">Hydrolase</keyword>
<keyword id="KW-0624">Polysaccharide degradation</keyword>
<keyword id="KW-1185">Reference proteome</keyword>
<keyword id="KW-0964">Secreted</keyword>
<keyword id="KW-0732">Signal</keyword>
<protein>
    <recommendedName>
        <fullName>Probable endo-beta-1,4-glucanase celB</fullName>
        <shortName>Endoglucanase celB</shortName>
        <ecNumber>3.2.1.4</ecNumber>
    </recommendedName>
    <alternativeName>
        <fullName>Carboxymethylcellulase celB</fullName>
    </alternativeName>
    <alternativeName>
        <fullName>Cellulase B</fullName>
    </alternativeName>
</protein>
<evidence type="ECO:0000250" key="1"/>
<evidence type="ECO:0000255" key="2"/>
<evidence type="ECO:0000305" key="3"/>
<accession>A1D932</accession>
<proteinExistence type="inferred from homology"/>
<organism>
    <name type="scientific">Neosartorya fischeri (strain ATCC 1020 / DSM 3700 / CBS 544.65 / FGSC A1164 / JCM 1740 / NRRL 181 / WB 181)</name>
    <name type="common">Aspergillus fischerianus</name>
    <dbReference type="NCBI Taxonomy" id="331117"/>
    <lineage>
        <taxon>Eukaryota</taxon>
        <taxon>Fungi</taxon>
        <taxon>Dikarya</taxon>
        <taxon>Ascomycota</taxon>
        <taxon>Pezizomycotina</taxon>
        <taxon>Eurotiomycetes</taxon>
        <taxon>Eurotiomycetidae</taxon>
        <taxon>Eurotiales</taxon>
        <taxon>Aspergillaceae</taxon>
        <taxon>Aspergillus</taxon>
        <taxon>Aspergillus subgen. Fumigati</taxon>
    </lineage>
</organism>